<evidence type="ECO:0000255" key="1">
    <source>
        <dbReference type="HAMAP-Rule" id="MF_00249"/>
    </source>
</evidence>
<evidence type="ECO:0000256" key="2">
    <source>
        <dbReference type="SAM" id="MobiDB-lite"/>
    </source>
</evidence>
<protein>
    <recommendedName>
        <fullName evidence="1">ATP-dependent protease ATPase subunit HslU</fullName>
    </recommendedName>
    <alternativeName>
        <fullName evidence="1">Unfoldase HslU</fullName>
    </alternativeName>
</protein>
<sequence length="467" mass="52329">MDTAGIRLTPKEIVSKLNEYIVGQNDAKRKVAIALRNRYRRSLLDEESKQEISPKNILMIGPTGVGKTEIARRMAKVVGAPFIKVEATKFTELGYVGRDVESMVRDLVDVSVRLVKAQKKSLVQDEATAKANEKLVKLLVPSMKKKASQTNNPLESLFGGAIPNFGQNNEDEEEPPTEEIKTKRSEIKRQLEEGKLEKEKVRIKVEQDPGALGMLGTNQNQQMQEMMNQLMPKKKVEREVAVETARKILADSYADELIDQESANQEALELAEQMGIIFIDEIDKVATNNHNSGQDVSRQGVQRDILPILEGSVIQTKYGTVNTEHMLFIGAGAFHVSKPSDLIPELQGRFPIRVELDSLSVEDFVRILTEPKLSLIKQYEALLQTEEVTVNFTDEAITRLAEIAYQVNQDTDNIGARRLHTILEKMLEDLSFEAPSMPNAVVDITPQYVDDKLKSISTNKDLSAFIL</sequence>
<comment type="function">
    <text evidence="1">ATPase subunit of a proteasome-like degradation complex; this subunit has chaperone activity. The binding of ATP and its subsequent hydrolysis by HslU are essential for unfolding of protein substrates subsequently hydrolyzed by HslV. HslU recognizes the N-terminal part of its protein substrates and unfolds these before they are guided to HslV for hydrolysis.</text>
</comment>
<comment type="subunit">
    <text evidence="1">A double ring-shaped homohexamer of HslV is capped on each side by a ring-shaped HslU homohexamer. The assembly of the HslU/HslV complex is dependent on binding of ATP.</text>
</comment>
<comment type="subcellular location">
    <subcellularLocation>
        <location evidence="1">Cytoplasm</location>
    </subcellularLocation>
</comment>
<comment type="similarity">
    <text evidence="1">Belongs to the ClpX chaperone family. HslU subfamily.</text>
</comment>
<gene>
    <name evidence="1" type="primary">hslU</name>
    <name type="ordered locus">SAHV_1244</name>
</gene>
<keyword id="KW-0067">ATP-binding</keyword>
<keyword id="KW-0143">Chaperone</keyword>
<keyword id="KW-0963">Cytoplasm</keyword>
<keyword id="KW-0547">Nucleotide-binding</keyword>
<keyword id="KW-0346">Stress response</keyword>
<reference key="1">
    <citation type="journal article" date="2008" name="Antimicrob. Agents Chemother.">
        <title>Mutated response regulator graR is responsible for phenotypic conversion of Staphylococcus aureus from heterogeneous vancomycin-intermediate resistance to vancomycin-intermediate resistance.</title>
        <authorList>
            <person name="Neoh H.-M."/>
            <person name="Cui L."/>
            <person name="Yuzawa H."/>
            <person name="Takeuchi F."/>
            <person name="Matsuo M."/>
            <person name="Hiramatsu K."/>
        </authorList>
    </citation>
    <scope>NUCLEOTIDE SEQUENCE [LARGE SCALE GENOMIC DNA]</scope>
    <source>
        <strain>Mu3 / ATCC 700698</strain>
    </source>
</reference>
<organism>
    <name type="scientific">Staphylococcus aureus (strain Mu3 / ATCC 700698)</name>
    <dbReference type="NCBI Taxonomy" id="418127"/>
    <lineage>
        <taxon>Bacteria</taxon>
        <taxon>Bacillati</taxon>
        <taxon>Bacillota</taxon>
        <taxon>Bacilli</taxon>
        <taxon>Bacillales</taxon>
        <taxon>Staphylococcaceae</taxon>
        <taxon>Staphylococcus</taxon>
    </lineage>
</organism>
<proteinExistence type="inferred from homology"/>
<feature type="chain" id="PRO_1000012817" description="ATP-dependent protease ATPase subunit HslU">
    <location>
        <begin position="1"/>
        <end position="467"/>
    </location>
</feature>
<feature type="region of interest" description="Disordered" evidence="2">
    <location>
        <begin position="149"/>
        <end position="192"/>
    </location>
</feature>
<feature type="compositionally biased region" description="Basic and acidic residues" evidence="2">
    <location>
        <begin position="178"/>
        <end position="192"/>
    </location>
</feature>
<feature type="binding site" evidence="1">
    <location>
        <position position="22"/>
    </location>
    <ligand>
        <name>ATP</name>
        <dbReference type="ChEBI" id="CHEBI:30616"/>
    </ligand>
</feature>
<feature type="binding site" evidence="1">
    <location>
        <begin position="64"/>
        <end position="69"/>
    </location>
    <ligand>
        <name>ATP</name>
        <dbReference type="ChEBI" id="CHEBI:30616"/>
    </ligand>
</feature>
<feature type="binding site" evidence="1">
    <location>
        <position position="280"/>
    </location>
    <ligand>
        <name>ATP</name>
        <dbReference type="ChEBI" id="CHEBI:30616"/>
    </ligand>
</feature>
<feature type="binding site" evidence="1">
    <location>
        <position position="345"/>
    </location>
    <ligand>
        <name>ATP</name>
        <dbReference type="ChEBI" id="CHEBI:30616"/>
    </ligand>
</feature>
<feature type="binding site" evidence="1">
    <location>
        <position position="417"/>
    </location>
    <ligand>
        <name>ATP</name>
        <dbReference type="ChEBI" id="CHEBI:30616"/>
    </ligand>
</feature>
<dbReference type="EMBL" id="AP009324">
    <property type="protein sequence ID" value="BAF78127.1"/>
    <property type="molecule type" value="Genomic_DNA"/>
</dbReference>
<dbReference type="RefSeq" id="WP_000379044.1">
    <property type="nucleotide sequence ID" value="NC_009782.1"/>
</dbReference>
<dbReference type="SMR" id="A7X1N1"/>
<dbReference type="KEGG" id="saw:SAHV_1244"/>
<dbReference type="HOGENOM" id="CLU_033123_0_0_9"/>
<dbReference type="GO" id="GO:0009376">
    <property type="term" value="C:HslUV protease complex"/>
    <property type="evidence" value="ECO:0007669"/>
    <property type="project" value="UniProtKB-UniRule"/>
</dbReference>
<dbReference type="GO" id="GO:0005524">
    <property type="term" value="F:ATP binding"/>
    <property type="evidence" value="ECO:0007669"/>
    <property type="project" value="UniProtKB-UniRule"/>
</dbReference>
<dbReference type="GO" id="GO:0016887">
    <property type="term" value="F:ATP hydrolysis activity"/>
    <property type="evidence" value="ECO:0007669"/>
    <property type="project" value="InterPro"/>
</dbReference>
<dbReference type="GO" id="GO:0008233">
    <property type="term" value="F:peptidase activity"/>
    <property type="evidence" value="ECO:0007669"/>
    <property type="project" value="InterPro"/>
</dbReference>
<dbReference type="GO" id="GO:0036402">
    <property type="term" value="F:proteasome-activating activity"/>
    <property type="evidence" value="ECO:0007669"/>
    <property type="project" value="UniProtKB-UniRule"/>
</dbReference>
<dbReference type="GO" id="GO:0043335">
    <property type="term" value="P:protein unfolding"/>
    <property type="evidence" value="ECO:0007669"/>
    <property type="project" value="UniProtKB-UniRule"/>
</dbReference>
<dbReference type="GO" id="GO:0051603">
    <property type="term" value="P:proteolysis involved in protein catabolic process"/>
    <property type="evidence" value="ECO:0007669"/>
    <property type="project" value="TreeGrafter"/>
</dbReference>
<dbReference type="CDD" id="cd19498">
    <property type="entry name" value="RecA-like_HslU"/>
    <property type="match status" value="1"/>
</dbReference>
<dbReference type="FunFam" id="3.40.50.300:FF:000220">
    <property type="entry name" value="ATP-dependent protease ATPase subunit HslU"/>
    <property type="match status" value="1"/>
</dbReference>
<dbReference type="Gene3D" id="1.10.8.60">
    <property type="match status" value="1"/>
</dbReference>
<dbReference type="Gene3D" id="3.40.50.300">
    <property type="entry name" value="P-loop containing nucleotide triphosphate hydrolases"/>
    <property type="match status" value="2"/>
</dbReference>
<dbReference type="HAMAP" id="MF_00249">
    <property type="entry name" value="HslU"/>
    <property type="match status" value="1"/>
</dbReference>
<dbReference type="InterPro" id="IPR003593">
    <property type="entry name" value="AAA+_ATPase"/>
</dbReference>
<dbReference type="InterPro" id="IPR050052">
    <property type="entry name" value="ATP-dep_Clp_protease_ClpX"/>
</dbReference>
<dbReference type="InterPro" id="IPR003959">
    <property type="entry name" value="ATPase_AAA_core"/>
</dbReference>
<dbReference type="InterPro" id="IPR019489">
    <property type="entry name" value="Clp_ATPase_C"/>
</dbReference>
<dbReference type="InterPro" id="IPR004491">
    <property type="entry name" value="HslU"/>
</dbReference>
<dbReference type="InterPro" id="IPR027417">
    <property type="entry name" value="P-loop_NTPase"/>
</dbReference>
<dbReference type="NCBIfam" id="TIGR00390">
    <property type="entry name" value="hslU"/>
    <property type="match status" value="1"/>
</dbReference>
<dbReference type="NCBIfam" id="NF003544">
    <property type="entry name" value="PRK05201.1"/>
    <property type="match status" value="1"/>
</dbReference>
<dbReference type="PANTHER" id="PTHR48102">
    <property type="entry name" value="ATP-DEPENDENT CLP PROTEASE ATP-BINDING SUBUNIT CLPX-LIKE, MITOCHONDRIAL-RELATED"/>
    <property type="match status" value="1"/>
</dbReference>
<dbReference type="PANTHER" id="PTHR48102:SF3">
    <property type="entry name" value="ATP-DEPENDENT PROTEASE ATPASE SUBUNIT HSLU"/>
    <property type="match status" value="1"/>
</dbReference>
<dbReference type="Pfam" id="PF00004">
    <property type="entry name" value="AAA"/>
    <property type="match status" value="1"/>
</dbReference>
<dbReference type="Pfam" id="PF07724">
    <property type="entry name" value="AAA_2"/>
    <property type="match status" value="1"/>
</dbReference>
<dbReference type="Pfam" id="PF10431">
    <property type="entry name" value="ClpB_D2-small"/>
    <property type="match status" value="1"/>
</dbReference>
<dbReference type="SMART" id="SM00382">
    <property type="entry name" value="AAA"/>
    <property type="match status" value="1"/>
</dbReference>
<dbReference type="SMART" id="SM01086">
    <property type="entry name" value="ClpB_D2-small"/>
    <property type="match status" value="1"/>
</dbReference>
<dbReference type="SUPFAM" id="SSF52540">
    <property type="entry name" value="P-loop containing nucleoside triphosphate hydrolases"/>
    <property type="match status" value="1"/>
</dbReference>
<name>HSLU_STAA1</name>
<accession>A7X1N1</accession>